<accession>Q7TV05</accession>
<sequence length="351" mass="36205">MPTSVTASSSWSQILEMLLEGQNLPEVEATALMEAWLAEQLTPVQTGAFLAALRAKGVTGNELSGMAQVLRGACPLPCPLPDIPMVDTCGTGGDGADTFNISTAVAFTAAACGANVAKHGNRSASGKVGSADVLEGLGLQLKAPLVSVVEALVEVGVTFLFAPAWHPALVNLAPLRRSLGVRTVFNLLGPLVNPLQPNAQVLGVAKAELLNPMAEALQRLGLQRAVVVHGAGGLDEASLEGANAMRLLENGHLRQASIDSAELGLTRAPLQALQGGDLATNQAILSAVLQGGGTAPQRDVVALNTALVLWAAGLQDDLQAGVSTAKTCLQEGLPWQRLEGLRMALDHQIGE</sequence>
<proteinExistence type="inferred from homology"/>
<dbReference type="EC" id="2.4.2.18" evidence="1"/>
<dbReference type="EMBL" id="BX548175">
    <property type="protein sequence ID" value="CAE20829.1"/>
    <property type="molecule type" value="Genomic_DNA"/>
</dbReference>
<dbReference type="RefSeq" id="WP_011130033.1">
    <property type="nucleotide sequence ID" value="NC_005071.1"/>
</dbReference>
<dbReference type="SMR" id="Q7TV05"/>
<dbReference type="KEGG" id="pmt:PMT_0654"/>
<dbReference type="eggNOG" id="COG0547">
    <property type="taxonomic scope" value="Bacteria"/>
</dbReference>
<dbReference type="HOGENOM" id="CLU_034315_2_1_3"/>
<dbReference type="OrthoDB" id="9806430at2"/>
<dbReference type="UniPathway" id="UPA00035">
    <property type="reaction ID" value="UER00041"/>
</dbReference>
<dbReference type="Proteomes" id="UP000001423">
    <property type="component" value="Chromosome"/>
</dbReference>
<dbReference type="GO" id="GO:0005829">
    <property type="term" value="C:cytosol"/>
    <property type="evidence" value="ECO:0007669"/>
    <property type="project" value="TreeGrafter"/>
</dbReference>
<dbReference type="GO" id="GO:0004048">
    <property type="term" value="F:anthranilate phosphoribosyltransferase activity"/>
    <property type="evidence" value="ECO:0007669"/>
    <property type="project" value="UniProtKB-UniRule"/>
</dbReference>
<dbReference type="GO" id="GO:0000287">
    <property type="term" value="F:magnesium ion binding"/>
    <property type="evidence" value="ECO:0007669"/>
    <property type="project" value="UniProtKB-UniRule"/>
</dbReference>
<dbReference type="GO" id="GO:0000162">
    <property type="term" value="P:L-tryptophan biosynthetic process"/>
    <property type="evidence" value="ECO:0007669"/>
    <property type="project" value="UniProtKB-UniRule"/>
</dbReference>
<dbReference type="FunFam" id="3.40.1030.10:FF:000002">
    <property type="entry name" value="Anthranilate phosphoribosyltransferase"/>
    <property type="match status" value="1"/>
</dbReference>
<dbReference type="Gene3D" id="3.40.1030.10">
    <property type="entry name" value="Nucleoside phosphorylase/phosphoribosyltransferase catalytic domain"/>
    <property type="match status" value="1"/>
</dbReference>
<dbReference type="Gene3D" id="1.20.970.10">
    <property type="entry name" value="Transferase, Pyrimidine Nucleoside Phosphorylase, Chain C"/>
    <property type="match status" value="1"/>
</dbReference>
<dbReference type="HAMAP" id="MF_00211">
    <property type="entry name" value="TrpD"/>
    <property type="match status" value="1"/>
</dbReference>
<dbReference type="InterPro" id="IPR005940">
    <property type="entry name" value="Anthranilate_Pribosyl_Tfrase"/>
</dbReference>
<dbReference type="InterPro" id="IPR000312">
    <property type="entry name" value="Glycosyl_Trfase_fam3"/>
</dbReference>
<dbReference type="InterPro" id="IPR017459">
    <property type="entry name" value="Glycosyl_Trfase_fam3_N_dom"/>
</dbReference>
<dbReference type="InterPro" id="IPR036320">
    <property type="entry name" value="Glycosyl_Trfase_fam3_N_dom_sf"/>
</dbReference>
<dbReference type="InterPro" id="IPR035902">
    <property type="entry name" value="Nuc_phospho_transferase"/>
</dbReference>
<dbReference type="NCBIfam" id="TIGR01245">
    <property type="entry name" value="trpD"/>
    <property type="match status" value="1"/>
</dbReference>
<dbReference type="PANTHER" id="PTHR43285">
    <property type="entry name" value="ANTHRANILATE PHOSPHORIBOSYLTRANSFERASE"/>
    <property type="match status" value="1"/>
</dbReference>
<dbReference type="PANTHER" id="PTHR43285:SF2">
    <property type="entry name" value="ANTHRANILATE PHOSPHORIBOSYLTRANSFERASE"/>
    <property type="match status" value="1"/>
</dbReference>
<dbReference type="Pfam" id="PF02885">
    <property type="entry name" value="Glycos_trans_3N"/>
    <property type="match status" value="1"/>
</dbReference>
<dbReference type="Pfam" id="PF00591">
    <property type="entry name" value="Glycos_transf_3"/>
    <property type="match status" value="1"/>
</dbReference>
<dbReference type="SUPFAM" id="SSF52418">
    <property type="entry name" value="Nucleoside phosphorylase/phosphoribosyltransferase catalytic domain"/>
    <property type="match status" value="1"/>
</dbReference>
<dbReference type="SUPFAM" id="SSF47648">
    <property type="entry name" value="Nucleoside phosphorylase/phosphoribosyltransferase N-terminal domain"/>
    <property type="match status" value="1"/>
</dbReference>
<comment type="function">
    <text evidence="1">Catalyzes the transfer of the phosphoribosyl group of 5-phosphorylribose-1-pyrophosphate (PRPP) to anthranilate to yield N-(5'-phosphoribosyl)-anthranilate (PRA).</text>
</comment>
<comment type="catalytic activity">
    <reaction evidence="1">
        <text>N-(5-phospho-beta-D-ribosyl)anthranilate + diphosphate = 5-phospho-alpha-D-ribose 1-diphosphate + anthranilate</text>
        <dbReference type="Rhea" id="RHEA:11768"/>
        <dbReference type="ChEBI" id="CHEBI:16567"/>
        <dbReference type="ChEBI" id="CHEBI:18277"/>
        <dbReference type="ChEBI" id="CHEBI:33019"/>
        <dbReference type="ChEBI" id="CHEBI:58017"/>
        <dbReference type="EC" id="2.4.2.18"/>
    </reaction>
</comment>
<comment type="cofactor">
    <cofactor evidence="1">
        <name>Mg(2+)</name>
        <dbReference type="ChEBI" id="CHEBI:18420"/>
    </cofactor>
    <text evidence="1">Binds 2 magnesium ions per monomer.</text>
</comment>
<comment type="pathway">
    <text evidence="1">Amino-acid biosynthesis; L-tryptophan biosynthesis; L-tryptophan from chorismate: step 2/5.</text>
</comment>
<comment type="subunit">
    <text evidence="1">Homodimer.</text>
</comment>
<comment type="similarity">
    <text evidence="1">Belongs to the anthranilate phosphoribosyltransferase family.</text>
</comment>
<name>TRPD_PROMM</name>
<keyword id="KW-0028">Amino-acid biosynthesis</keyword>
<keyword id="KW-0057">Aromatic amino acid biosynthesis</keyword>
<keyword id="KW-0328">Glycosyltransferase</keyword>
<keyword id="KW-0460">Magnesium</keyword>
<keyword id="KW-0479">Metal-binding</keyword>
<keyword id="KW-1185">Reference proteome</keyword>
<keyword id="KW-0808">Transferase</keyword>
<keyword id="KW-0822">Tryptophan biosynthesis</keyword>
<evidence type="ECO:0000255" key="1">
    <source>
        <dbReference type="HAMAP-Rule" id="MF_00211"/>
    </source>
</evidence>
<feature type="chain" id="PRO_0000227179" description="Anthranilate phosphoribosyltransferase">
    <location>
        <begin position="1"/>
        <end position="351"/>
    </location>
</feature>
<feature type="binding site" evidence="1">
    <location>
        <position position="90"/>
    </location>
    <ligand>
        <name>5-phospho-alpha-D-ribose 1-diphosphate</name>
        <dbReference type="ChEBI" id="CHEBI:58017"/>
    </ligand>
</feature>
<feature type="binding site" evidence="1">
    <location>
        <position position="90"/>
    </location>
    <ligand>
        <name>anthranilate</name>
        <dbReference type="ChEBI" id="CHEBI:16567"/>
        <label>1</label>
    </ligand>
</feature>
<feature type="binding site" evidence="1">
    <location>
        <begin position="93"/>
        <end position="94"/>
    </location>
    <ligand>
        <name>5-phospho-alpha-D-ribose 1-diphosphate</name>
        <dbReference type="ChEBI" id="CHEBI:58017"/>
    </ligand>
</feature>
<feature type="binding site" evidence="1">
    <location>
        <position position="98"/>
    </location>
    <ligand>
        <name>5-phospho-alpha-D-ribose 1-diphosphate</name>
        <dbReference type="ChEBI" id="CHEBI:58017"/>
    </ligand>
</feature>
<feature type="binding site" evidence="1">
    <location>
        <begin position="100"/>
        <end position="103"/>
    </location>
    <ligand>
        <name>5-phospho-alpha-D-ribose 1-diphosphate</name>
        <dbReference type="ChEBI" id="CHEBI:58017"/>
    </ligand>
</feature>
<feature type="binding site" evidence="1">
    <location>
        <position position="102"/>
    </location>
    <ligand>
        <name>Mg(2+)</name>
        <dbReference type="ChEBI" id="CHEBI:18420"/>
        <label>1</label>
    </ligand>
</feature>
<feature type="binding site" evidence="1">
    <location>
        <begin position="118"/>
        <end position="126"/>
    </location>
    <ligand>
        <name>5-phospho-alpha-D-ribose 1-diphosphate</name>
        <dbReference type="ChEBI" id="CHEBI:58017"/>
    </ligand>
</feature>
<feature type="binding site" evidence="1">
    <location>
        <position position="121"/>
    </location>
    <ligand>
        <name>anthranilate</name>
        <dbReference type="ChEBI" id="CHEBI:16567"/>
        <label>1</label>
    </ligand>
</feature>
<feature type="binding site" evidence="1">
    <location>
        <position position="130"/>
    </location>
    <ligand>
        <name>5-phospho-alpha-D-ribose 1-diphosphate</name>
        <dbReference type="ChEBI" id="CHEBI:58017"/>
    </ligand>
</feature>
<feature type="binding site" evidence="1">
    <location>
        <position position="176"/>
    </location>
    <ligand>
        <name>anthranilate</name>
        <dbReference type="ChEBI" id="CHEBI:16567"/>
        <label>2</label>
    </ligand>
</feature>
<feature type="binding site" evidence="1">
    <location>
        <position position="235"/>
    </location>
    <ligand>
        <name>Mg(2+)</name>
        <dbReference type="ChEBI" id="CHEBI:18420"/>
        <label>2</label>
    </ligand>
</feature>
<feature type="binding site" evidence="1">
    <location>
        <position position="236"/>
    </location>
    <ligand>
        <name>Mg(2+)</name>
        <dbReference type="ChEBI" id="CHEBI:18420"/>
        <label>1</label>
    </ligand>
</feature>
<feature type="binding site" evidence="1">
    <location>
        <position position="236"/>
    </location>
    <ligand>
        <name>Mg(2+)</name>
        <dbReference type="ChEBI" id="CHEBI:18420"/>
        <label>2</label>
    </ligand>
</feature>
<reference key="1">
    <citation type="journal article" date="2003" name="Nature">
        <title>Genome divergence in two Prochlorococcus ecotypes reflects oceanic niche differentiation.</title>
        <authorList>
            <person name="Rocap G."/>
            <person name="Larimer F.W."/>
            <person name="Lamerdin J.E."/>
            <person name="Malfatti S."/>
            <person name="Chain P."/>
            <person name="Ahlgren N.A."/>
            <person name="Arellano A."/>
            <person name="Coleman M."/>
            <person name="Hauser L."/>
            <person name="Hess W.R."/>
            <person name="Johnson Z.I."/>
            <person name="Land M.L."/>
            <person name="Lindell D."/>
            <person name="Post A.F."/>
            <person name="Regala W."/>
            <person name="Shah M."/>
            <person name="Shaw S.L."/>
            <person name="Steglich C."/>
            <person name="Sullivan M.B."/>
            <person name="Ting C.S."/>
            <person name="Tolonen A."/>
            <person name="Webb E.A."/>
            <person name="Zinser E.R."/>
            <person name="Chisholm S.W."/>
        </authorList>
    </citation>
    <scope>NUCLEOTIDE SEQUENCE [LARGE SCALE GENOMIC DNA]</scope>
    <source>
        <strain>MIT 9313</strain>
    </source>
</reference>
<protein>
    <recommendedName>
        <fullName evidence="1">Anthranilate phosphoribosyltransferase</fullName>
        <ecNumber evidence="1">2.4.2.18</ecNumber>
    </recommendedName>
</protein>
<organism>
    <name type="scientific">Prochlorococcus marinus (strain MIT 9313)</name>
    <dbReference type="NCBI Taxonomy" id="74547"/>
    <lineage>
        <taxon>Bacteria</taxon>
        <taxon>Bacillati</taxon>
        <taxon>Cyanobacteriota</taxon>
        <taxon>Cyanophyceae</taxon>
        <taxon>Synechococcales</taxon>
        <taxon>Prochlorococcaceae</taxon>
        <taxon>Prochlorococcus</taxon>
    </lineage>
</organism>
<gene>
    <name evidence="1" type="primary">trpD</name>
    <name type="ordered locus">PMT_0654</name>
</gene>